<reference key="1">
    <citation type="journal article" date="2009" name="PLoS Genet.">
        <title>Organised genome dynamics in the Escherichia coli species results in highly diverse adaptive paths.</title>
        <authorList>
            <person name="Touchon M."/>
            <person name="Hoede C."/>
            <person name="Tenaillon O."/>
            <person name="Barbe V."/>
            <person name="Baeriswyl S."/>
            <person name="Bidet P."/>
            <person name="Bingen E."/>
            <person name="Bonacorsi S."/>
            <person name="Bouchier C."/>
            <person name="Bouvet O."/>
            <person name="Calteau A."/>
            <person name="Chiapello H."/>
            <person name="Clermont O."/>
            <person name="Cruveiller S."/>
            <person name="Danchin A."/>
            <person name="Diard M."/>
            <person name="Dossat C."/>
            <person name="Karoui M.E."/>
            <person name="Frapy E."/>
            <person name="Garry L."/>
            <person name="Ghigo J.M."/>
            <person name="Gilles A.M."/>
            <person name="Johnson J."/>
            <person name="Le Bouguenec C."/>
            <person name="Lescat M."/>
            <person name="Mangenot S."/>
            <person name="Martinez-Jehanne V."/>
            <person name="Matic I."/>
            <person name="Nassif X."/>
            <person name="Oztas S."/>
            <person name="Petit M.A."/>
            <person name="Pichon C."/>
            <person name="Rouy Z."/>
            <person name="Ruf C.S."/>
            <person name="Schneider D."/>
            <person name="Tourret J."/>
            <person name="Vacherie B."/>
            <person name="Vallenet D."/>
            <person name="Medigue C."/>
            <person name="Rocha E.P.C."/>
            <person name="Denamur E."/>
        </authorList>
    </citation>
    <scope>NUCLEOTIDE SEQUENCE [LARGE SCALE GENOMIC DNA]</scope>
    <source>
        <strain>55989 / EAEC</strain>
    </source>
</reference>
<accession>B7LA91</accession>
<proteinExistence type="inferred from homology"/>
<organism>
    <name type="scientific">Escherichia coli (strain 55989 / EAEC)</name>
    <dbReference type="NCBI Taxonomy" id="585055"/>
    <lineage>
        <taxon>Bacteria</taxon>
        <taxon>Pseudomonadati</taxon>
        <taxon>Pseudomonadota</taxon>
        <taxon>Gammaproteobacteria</taxon>
        <taxon>Enterobacterales</taxon>
        <taxon>Enterobacteriaceae</taxon>
        <taxon>Escherichia</taxon>
    </lineage>
</organism>
<sequence>MTELKNDRYLRALLRQPVDVTPVWMMRQAGRYLPEYKATRAQAGDFMSLCKNAELACEVTLQPLRRYPLDAAILFSDILTVPDAMGLGLYFEAGEGPRFTSPVTCKADVDKLPIPDPEDELGYVMNAVRTIRRELKGEVPLIGFSGSPWTLATYMVEGGSSKAFTVIKKMMYADPQALHALLDKLAKSVTLYLNAQIKAGAQAVMIFDTWGGVLTGRDYQQFSLYYMHKIVDGLVRENDGRRVPVTLFTKGGGQWLEAMAETGCDALGLDWTTDIADARRRVGNKVALQGNMDPSMLYAPPARIEEEVATILAGFGHGEGHVFNLGHGIHQDVPPEHAGVFVEAVHRLSEQYHR</sequence>
<keyword id="KW-0963">Cytoplasm</keyword>
<keyword id="KW-0210">Decarboxylase</keyword>
<keyword id="KW-0456">Lyase</keyword>
<keyword id="KW-0627">Porphyrin biosynthesis</keyword>
<keyword id="KW-1185">Reference proteome</keyword>
<feature type="chain" id="PRO_1000197517" description="Uroporphyrinogen decarboxylase">
    <location>
        <begin position="1"/>
        <end position="354"/>
    </location>
</feature>
<feature type="binding site" evidence="1">
    <location>
        <begin position="27"/>
        <end position="31"/>
    </location>
    <ligand>
        <name>substrate</name>
    </ligand>
</feature>
<feature type="binding site" evidence="1">
    <location>
        <position position="77"/>
    </location>
    <ligand>
        <name>substrate</name>
    </ligand>
</feature>
<feature type="binding site" evidence="1">
    <location>
        <position position="154"/>
    </location>
    <ligand>
        <name>substrate</name>
    </ligand>
</feature>
<feature type="binding site" evidence="1">
    <location>
        <position position="209"/>
    </location>
    <ligand>
        <name>substrate</name>
    </ligand>
</feature>
<feature type="binding site" evidence="1">
    <location>
        <position position="327"/>
    </location>
    <ligand>
        <name>substrate</name>
    </ligand>
</feature>
<feature type="site" description="Transition state stabilizer" evidence="1">
    <location>
        <position position="77"/>
    </location>
</feature>
<name>DCUP_ECO55</name>
<gene>
    <name evidence="1" type="primary">hemE</name>
    <name type="ordered locus">EC55989_4482</name>
</gene>
<evidence type="ECO:0000255" key="1">
    <source>
        <dbReference type="HAMAP-Rule" id="MF_00218"/>
    </source>
</evidence>
<comment type="function">
    <text evidence="1">Catalyzes the decarboxylation of four acetate groups of uroporphyrinogen-III to yield coproporphyrinogen-III.</text>
</comment>
<comment type="catalytic activity">
    <reaction evidence="1">
        <text>uroporphyrinogen III + 4 H(+) = coproporphyrinogen III + 4 CO2</text>
        <dbReference type="Rhea" id="RHEA:19865"/>
        <dbReference type="ChEBI" id="CHEBI:15378"/>
        <dbReference type="ChEBI" id="CHEBI:16526"/>
        <dbReference type="ChEBI" id="CHEBI:57308"/>
        <dbReference type="ChEBI" id="CHEBI:57309"/>
        <dbReference type="EC" id="4.1.1.37"/>
    </reaction>
</comment>
<comment type="pathway">
    <text evidence="1">Porphyrin-containing compound metabolism; protoporphyrin-IX biosynthesis; coproporphyrinogen-III from 5-aminolevulinate: step 4/4.</text>
</comment>
<comment type="subunit">
    <text evidence="1">Homodimer.</text>
</comment>
<comment type="subcellular location">
    <subcellularLocation>
        <location evidence="1">Cytoplasm</location>
    </subcellularLocation>
</comment>
<comment type="similarity">
    <text evidence="1">Belongs to the uroporphyrinogen decarboxylase family.</text>
</comment>
<protein>
    <recommendedName>
        <fullName evidence="1">Uroporphyrinogen decarboxylase</fullName>
        <shortName evidence="1">UPD</shortName>
        <shortName evidence="1">URO-D</shortName>
        <ecNumber evidence="1">4.1.1.37</ecNumber>
    </recommendedName>
</protein>
<dbReference type="EC" id="4.1.1.37" evidence="1"/>
<dbReference type="EMBL" id="CU928145">
    <property type="protein sequence ID" value="CAV01247.1"/>
    <property type="molecule type" value="Genomic_DNA"/>
</dbReference>
<dbReference type="RefSeq" id="WP_000137662.1">
    <property type="nucleotide sequence ID" value="NC_011748.1"/>
</dbReference>
<dbReference type="SMR" id="B7LA91"/>
<dbReference type="KEGG" id="eck:EC55989_4482"/>
<dbReference type="HOGENOM" id="CLU_040933_0_0_6"/>
<dbReference type="UniPathway" id="UPA00251">
    <property type="reaction ID" value="UER00321"/>
</dbReference>
<dbReference type="Proteomes" id="UP000000746">
    <property type="component" value="Chromosome"/>
</dbReference>
<dbReference type="GO" id="GO:0005829">
    <property type="term" value="C:cytosol"/>
    <property type="evidence" value="ECO:0007669"/>
    <property type="project" value="TreeGrafter"/>
</dbReference>
<dbReference type="GO" id="GO:0004853">
    <property type="term" value="F:uroporphyrinogen decarboxylase activity"/>
    <property type="evidence" value="ECO:0007669"/>
    <property type="project" value="UniProtKB-UniRule"/>
</dbReference>
<dbReference type="GO" id="GO:0019353">
    <property type="term" value="P:protoporphyrinogen IX biosynthetic process from glutamate"/>
    <property type="evidence" value="ECO:0007669"/>
    <property type="project" value="TreeGrafter"/>
</dbReference>
<dbReference type="CDD" id="cd00717">
    <property type="entry name" value="URO-D"/>
    <property type="match status" value="1"/>
</dbReference>
<dbReference type="FunFam" id="3.20.20.210:FF:000001">
    <property type="entry name" value="Uroporphyrinogen decarboxylase"/>
    <property type="match status" value="1"/>
</dbReference>
<dbReference type="Gene3D" id="3.20.20.210">
    <property type="match status" value="1"/>
</dbReference>
<dbReference type="HAMAP" id="MF_00218">
    <property type="entry name" value="URO_D"/>
    <property type="match status" value="1"/>
</dbReference>
<dbReference type="InterPro" id="IPR038071">
    <property type="entry name" value="UROD/MetE-like_sf"/>
</dbReference>
<dbReference type="InterPro" id="IPR006361">
    <property type="entry name" value="Uroporphyrinogen_deCO2ase_HemE"/>
</dbReference>
<dbReference type="InterPro" id="IPR000257">
    <property type="entry name" value="Uroporphyrinogen_deCOase"/>
</dbReference>
<dbReference type="NCBIfam" id="TIGR01464">
    <property type="entry name" value="hemE"/>
    <property type="match status" value="1"/>
</dbReference>
<dbReference type="PANTHER" id="PTHR21091">
    <property type="entry name" value="METHYLTETRAHYDROFOLATE:HOMOCYSTEINE METHYLTRANSFERASE RELATED"/>
    <property type="match status" value="1"/>
</dbReference>
<dbReference type="PANTHER" id="PTHR21091:SF169">
    <property type="entry name" value="UROPORPHYRINOGEN DECARBOXYLASE"/>
    <property type="match status" value="1"/>
</dbReference>
<dbReference type="Pfam" id="PF01208">
    <property type="entry name" value="URO-D"/>
    <property type="match status" value="1"/>
</dbReference>
<dbReference type="SUPFAM" id="SSF51726">
    <property type="entry name" value="UROD/MetE-like"/>
    <property type="match status" value="1"/>
</dbReference>
<dbReference type="PROSITE" id="PS00906">
    <property type="entry name" value="UROD_1"/>
    <property type="match status" value="1"/>
</dbReference>
<dbReference type="PROSITE" id="PS00907">
    <property type="entry name" value="UROD_2"/>
    <property type="match status" value="1"/>
</dbReference>